<comment type="catalytic activity">
    <reaction evidence="1">
        <text>tRNA(Phe) + L-phenylalanine + ATP = L-phenylalanyl-tRNA(Phe) + AMP + diphosphate + H(+)</text>
        <dbReference type="Rhea" id="RHEA:19413"/>
        <dbReference type="Rhea" id="RHEA-COMP:9668"/>
        <dbReference type="Rhea" id="RHEA-COMP:9699"/>
        <dbReference type="ChEBI" id="CHEBI:15378"/>
        <dbReference type="ChEBI" id="CHEBI:30616"/>
        <dbReference type="ChEBI" id="CHEBI:33019"/>
        <dbReference type="ChEBI" id="CHEBI:58095"/>
        <dbReference type="ChEBI" id="CHEBI:78442"/>
        <dbReference type="ChEBI" id="CHEBI:78531"/>
        <dbReference type="ChEBI" id="CHEBI:456215"/>
        <dbReference type="EC" id="6.1.1.20"/>
    </reaction>
</comment>
<comment type="cofactor">
    <cofactor evidence="1">
        <name>Mg(2+)</name>
        <dbReference type="ChEBI" id="CHEBI:18420"/>
    </cofactor>
    <text evidence="1">Binds 2 magnesium ions per tetramer.</text>
</comment>
<comment type="subunit">
    <text evidence="1">Tetramer of two alpha and two beta subunits.</text>
</comment>
<comment type="subcellular location">
    <subcellularLocation>
        <location evidence="1">Cytoplasm</location>
    </subcellularLocation>
</comment>
<comment type="similarity">
    <text evidence="1">Belongs to the class-II aminoacyl-tRNA synthetase family. Phe-tRNA synthetase alpha subunit type 1 subfamily.</text>
</comment>
<evidence type="ECO:0000255" key="1">
    <source>
        <dbReference type="HAMAP-Rule" id="MF_00281"/>
    </source>
</evidence>
<protein>
    <recommendedName>
        <fullName evidence="1">Phenylalanine--tRNA ligase alpha subunit</fullName>
        <ecNumber evidence="1">6.1.1.20</ecNumber>
    </recommendedName>
    <alternativeName>
        <fullName evidence="1">Phenylalanyl-tRNA synthetase alpha subunit</fullName>
        <shortName evidence="1">PheRS</shortName>
    </alternativeName>
</protein>
<feature type="chain" id="PRO_1000119388" description="Phenylalanine--tRNA ligase alpha subunit">
    <location>
        <begin position="1"/>
        <end position="344"/>
    </location>
</feature>
<feature type="binding site" evidence="1">
    <location>
        <position position="256"/>
    </location>
    <ligand>
        <name>Mg(2+)</name>
        <dbReference type="ChEBI" id="CHEBI:18420"/>
        <note>shared with beta subunit</note>
    </ligand>
</feature>
<sequence length="344" mass="38990">MEARLKELKQKALELIEEAKELKGLNDVRVAYLGKKGPITEVLRGMGKLSAEERPRMGALVNEVREAIQTRLEDKISNLEKAVIEAKLATETIDVTLPGRPVETGCHHPLTAVVEQIEDVFIGMGYEVAEGTEVEKDYYNFEALNLPKDHPARDMQDTFYITEETLLRTHTSSVQARTMENNKEKGPIKIICPGKVYRRDDDDATHSHQFMQIEGLVIDKNIRMSDLKGTLQVFVKKMFGEDREIRLRPSFFPFTEPSVEMDISCMMCHGKGCGTCKGTGWIEILGAGMVHPNVLEMAGYDSKEYQGFAFGMGAERIAMLKYGVDDIRHFYTNDVRFLQQFKRA</sequence>
<gene>
    <name evidence="1" type="primary">pheS</name>
    <name type="ordered locus">BCB4264_A4672</name>
</gene>
<reference key="1">
    <citation type="submission" date="2008-10" db="EMBL/GenBank/DDBJ databases">
        <title>Genome sequence of Bacillus cereus B4264.</title>
        <authorList>
            <person name="Dodson R.J."/>
            <person name="Durkin A.S."/>
            <person name="Rosovitz M.J."/>
            <person name="Rasko D.A."/>
            <person name="Hoffmaster A."/>
            <person name="Ravel J."/>
            <person name="Sutton G."/>
        </authorList>
    </citation>
    <scope>NUCLEOTIDE SEQUENCE [LARGE SCALE GENOMIC DNA]</scope>
    <source>
        <strain>B4264</strain>
    </source>
</reference>
<dbReference type="EC" id="6.1.1.20" evidence="1"/>
<dbReference type="EMBL" id="CP001176">
    <property type="protein sequence ID" value="ACK61871.1"/>
    <property type="molecule type" value="Genomic_DNA"/>
</dbReference>
<dbReference type="RefSeq" id="WP_000388222.1">
    <property type="nucleotide sequence ID" value="NZ_VEHB01000006.1"/>
</dbReference>
<dbReference type="SMR" id="B7HF77"/>
<dbReference type="GeneID" id="87591739"/>
<dbReference type="KEGG" id="bcb:BCB4264_A4672"/>
<dbReference type="HOGENOM" id="CLU_025086_0_1_9"/>
<dbReference type="Proteomes" id="UP000007096">
    <property type="component" value="Chromosome"/>
</dbReference>
<dbReference type="GO" id="GO:0005737">
    <property type="term" value="C:cytoplasm"/>
    <property type="evidence" value="ECO:0007669"/>
    <property type="project" value="UniProtKB-SubCell"/>
</dbReference>
<dbReference type="GO" id="GO:0005524">
    <property type="term" value="F:ATP binding"/>
    <property type="evidence" value="ECO:0007669"/>
    <property type="project" value="UniProtKB-UniRule"/>
</dbReference>
<dbReference type="GO" id="GO:0140096">
    <property type="term" value="F:catalytic activity, acting on a protein"/>
    <property type="evidence" value="ECO:0007669"/>
    <property type="project" value="UniProtKB-ARBA"/>
</dbReference>
<dbReference type="GO" id="GO:0000287">
    <property type="term" value="F:magnesium ion binding"/>
    <property type="evidence" value="ECO:0007669"/>
    <property type="project" value="UniProtKB-UniRule"/>
</dbReference>
<dbReference type="GO" id="GO:0004826">
    <property type="term" value="F:phenylalanine-tRNA ligase activity"/>
    <property type="evidence" value="ECO:0007669"/>
    <property type="project" value="UniProtKB-UniRule"/>
</dbReference>
<dbReference type="GO" id="GO:0016740">
    <property type="term" value="F:transferase activity"/>
    <property type="evidence" value="ECO:0007669"/>
    <property type="project" value="UniProtKB-ARBA"/>
</dbReference>
<dbReference type="GO" id="GO:0000049">
    <property type="term" value="F:tRNA binding"/>
    <property type="evidence" value="ECO:0007669"/>
    <property type="project" value="InterPro"/>
</dbReference>
<dbReference type="GO" id="GO:0006432">
    <property type="term" value="P:phenylalanyl-tRNA aminoacylation"/>
    <property type="evidence" value="ECO:0007669"/>
    <property type="project" value="UniProtKB-UniRule"/>
</dbReference>
<dbReference type="CDD" id="cd00496">
    <property type="entry name" value="PheRS_alpha_core"/>
    <property type="match status" value="1"/>
</dbReference>
<dbReference type="FunFam" id="3.30.930.10:FF:000003">
    <property type="entry name" value="Phenylalanine--tRNA ligase alpha subunit"/>
    <property type="match status" value="1"/>
</dbReference>
<dbReference type="Gene3D" id="3.30.930.10">
    <property type="entry name" value="Bira Bifunctional Protein, Domain 2"/>
    <property type="match status" value="1"/>
</dbReference>
<dbReference type="HAMAP" id="MF_00281">
    <property type="entry name" value="Phe_tRNA_synth_alpha1"/>
    <property type="match status" value="1"/>
</dbReference>
<dbReference type="InterPro" id="IPR006195">
    <property type="entry name" value="aa-tRNA-synth_II"/>
</dbReference>
<dbReference type="InterPro" id="IPR045864">
    <property type="entry name" value="aa-tRNA-synth_II/BPL/LPL"/>
</dbReference>
<dbReference type="InterPro" id="IPR004529">
    <property type="entry name" value="Phe-tRNA-synth_IIc_asu"/>
</dbReference>
<dbReference type="InterPro" id="IPR004188">
    <property type="entry name" value="Phe-tRNA_ligase_II_N"/>
</dbReference>
<dbReference type="InterPro" id="IPR022911">
    <property type="entry name" value="Phe_tRNA_ligase_alpha1_bac"/>
</dbReference>
<dbReference type="InterPro" id="IPR002319">
    <property type="entry name" value="Phenylalanyl-tRNA_Synthase"/>
</dbReference>
<dbReference type="InterPro" id="IPR010978">
    <property type="entry name" value="tRNA-bd_arm"/>
</dbReference>
<dbReference type="NCBIfam" id="TIGR00468">
    <property type="entry name" value="pheS"/>
    <property type="match status" value="1"/>
</dbReference>
<dbReference type="PANTHER" id="PTHR11538:SF41">
    <property type="entry name" value="PHENYLALANINE--TRNA LIGASE, MITOCHONDRIAL"/>
    <property type="match status" value="1"/>
</dbReference>
<dbReference type="PANTHER" id="PTHR11538">
    <property type="entry name" value="PHENYLALANYL-TRNA SYNTHETASE"/>
    <property type="match status" value="1"/>
</dbReference>
<dbReference type="Pfam" id="PF02912">
    <property type="entry name" value="Phe_tRNA-synt_N"/>
    <property type="match status" value="1"/>
</dbReference>
<dbReference type="Pfam" id="PF01409">
    <property type="entry name" value="tRNA-synt_2d"/>
    <property type="match status" value="1"/>
</dbReference>
<dbReference type="SUPFAM" id="SSF55681">
    <property type="entry name" value="Class II aaRS and biotin synthetases"/>
    <property type="match status" value="1"/>
</dbReference>
<dbReference type="SUPFAM" id="SSF46589">
    <property type="entry name" value="tRNA-binding arm"/>
    <property type="match status" value="1"/>
</dbReference>
<dbReference type="PROSITE" id="PS50862">
    <property type="entry name" value="AA_TRNA_LIGASE_II"/>
    <property type="match status" value="1"/>
</dbReference>
<organism>
    <name type="scientific">Bacillus cereus (strain B4264)</name>
    <dbReference type="NCBI Taxonomy" id="405532"/>
    <lineage>
        <taxon>Bacteria</taxon>
        <taxon>Bacillati</taxon>
        <taxon>Bacillota</taxon>
        <taxon>Bacilli</taxon>
        <taxon>Bacillales</taxon>
        <taxon>Bacillaceae</taxon>
        <taxon>Bacillus</taxon>
        <taxon>Bacillus cereus group</taxon>
    </lineage>
</organism>
<accession>B7HF77</accession>
<proteinExistence type="inferred from homology"/>
<name>SYFA_BACC4</name>
<keyword id="KW-0030">Aminoacyl-tRNA synthetase</keyword>
<keyword id="KW-0067">ATP-binding</keyword>
<keyword id="KW-0963">Cytoplasm</keyword>
<keyword id="KW-0436">Ligase</keyword>
<keyword id="KW-0460">Magnesium</keyword>
<keyword id="KW-0479">Metal-binding</keyword>
<keyword id="KW-0547">Nucleotide-binding</keyword>
<keyword id="KW-0648">Protein biosynthesis</keyword>